<feature type="chain" id="PRO_1000017899" description="Uridine kinase">
    <location>
        <begin position="1"/>
        <end position="212"/>
    </location>
</feature>
<feature type="binding site" evidence="1">
    <location>
        <begin position="13"/>
        <end position="20"/>
    </location>
    <ligand>
        <name>ATP</name>
        <dbReference type="ChEBI" id="CHEBI:30616"/>
    </ligand>
</feature>
<protein>
    <recommendedName>
        <fullName evidence="1">Uridine kinase</fullName>
        <ecNumber evidence="1">2.7.1.48</ecNumber>
    </recommendedName>
    <alternativeName>
        <fullName evidence="1">Cytidine monophosphokinase</fullName>
    </alternativeName>
    <alternativeName>
        <fullName evidence="1">Uridine monophosphokinase</fullName>
    </alternativeName>
</protein>
<evidence type="ECO:0000255" key="1">
    <source>
        <dbReference type="HAMAP-Rule" id="MF_00551"/>
    </source>
</evidence>
<keyword id="KW-0067">ATP-binding</keyword>
<keyword id="KW-0963">Cytoplasm</keyword>
<keyword id="KW-0418">Kinase</keyword>
<keyword id="KW-0547">Nucleotide-binding</keyword>
<keyword id="KW-0808">Transferase</keyword>
<organism>
    <name type="scientific">Shewanella sp. (strain W3-18-1)</name>
    <dbReference type="NCBI Taxonomy" id="351745"/>
    <lineage>
        <taxon>Bacteria</taxon>
        <taxon>Pseudomonadati</taxon>
        <taxon>Pseudomonadota</taxon>
        <taxon>Gammaproteobacteria</taxon>
        <taxon>Alteromonadales</taxon>
        <taxon>Shewanellaceae</taxon>
        <taxon>Shewanella</taxon>
    </lineage>
</organism>
<dbReference type="EC" id="2.7.1.48" evidence="1"/>
<dbReference type="EMBL" id="CP000503">
    <property type="protein sequence ID" value="ABM24627.1"/>
    <property type="molecule type" value="Genomic_DNA"/>
</dbReference>
<dbReference type="RefSeq" id="WP_011789123.1">
    <property type="nucleotide sequence ID" value="NC_008750.1"/>
</dbReference>
<dbReference type="SMR" id="A1RIY2"/>
<dbReference type="GeneID" id="67443752"/>
<dbReference type="KEGG" id="shw:Sputw3181_1791"/>
<dbReference type="HOGENOM" id="CLU_021278_1_2_6"/>
<dbReference type="UniPathway" id="UPA00574">
    <property type="reaction ID" value="UER00637"/>
</dbReference>
<dbReference type="UniPathway" id="UPA00579">
    <property type="reaction ID" value="UER00640"/>
</dbReference>
<dbReference type="Proteomes" id="UP000002597">
    <property type="component" value="Chromosome"/>
</dbReference>
<dbReference type="GO" id="GO:0005737">
    <property type="term" value="C:cytoplasm"/>
    <property type="evidence" value="ECO:0007669"/>
    <property type="project" value="UniProtKB-SubCell"/>
</dbReference>
<dbReference type="GO" id="GO:0005524">
    <property type="term" value="F:ATP binding"/>
    <property type="evidence" value="ECO:0007669"/>
    <property type="project" value="UniProtKB-UniRule"/>
</dbReference>
<dbReference type="GO" id="GO:0043771">
    <property type="term" value="F:cytidine kinase activity"/>
    <property type="evidence" value="ECO:0007669"/>
    <property type="project" value="RHEA"/>
</dbReference>
<dbReference type="GO" id="GO:0004849">
    <property type="term" value="F:uridine kinase activity"/>
    <property type="evidence" value="ECO:0007669"/>
    <property type="project" value="UniProtKB-UniRule"/>
</dbReference>
<dbReference type="GO" id="GO:0044211">
    <property type="term" value="P:CTP salvage"/>
    <property type="evidence" value="ECO:0007669"/>
    <property type="project" value="UniProtKB-UniRule"/>
</dbReference>
<dbReference type="GO" id="GO:0044206">
    <property type="term" value="P:UMP salvage"/>
    <property type="evidence" value="ECO:0007669"/>
    <property type="project" value="UniProtKB-UniRule"/>
</dbReference>
<dbReference type="CDD" id="cd02023">
    <property type="entry name" value="UMPK"/>
    <property type="match status" value="1"/>
</dbReference>
<dbReference type="Gene3D" id="3.40.50.300">
    <property type="entry name" value="P-loop containing nucleotide triphosphate hydrolases"/>
    <property type="match status" value="1"/>
</dbReference>
<dbReference type="HAMAP" id="MF_00551">
    <property type="entry name" value="Uridine_kinase"/>
    <property type="match status" value="1"/>
</dbReference>
<dbReference type="InterPro" id="IPR027417">
    <property type="entry name" value="P-loop_NTPase"/>
</dbReference>
<dbReference type="InterPro" id="IPR006083">
    <property type="entry name" value="PRK/URK"/>
</dbReference>
<dbReference type="InterPro" id="IPR026008">
    <property type="entry name" value="Uridine_kinase"/>
</dbReference>
<dbReference type="InterPro" id="IPR000764">
    <property type="entry name" value="Uridine_kinase-like"/>
</dbReference>
<dbReference type="NCBIfam" id="NF004018">
    <property type="entry name" value="PRK05480.1"/>
    <property type="match status" value="1"/>
</dbReference>
<dbReference type="NCBIfam" id="TIGR00235">
    <property type="entry name" value="udk"/>
    <property type="match status" value="1"/>
</dbReference>
<dbReference type="PANTHER" id="PTHR10285">
    <property type="entry name" value="URIDINE KINASE"/>
    <property type="match status" value="1"/>
</dbReference>
<dbReference type="Pfam" id="PF00485">
    <property type="entry name" value="PRK"/>
    <property type="match status" value="1"/>
</dbReference>
<dbReference type="PRINTS" id="PR00988">
    <property type="entry name" value="URIDINKINASE"/>
</dbReference>
<dbReference type="SUPFAM" id="SSF52540">
    <property type="entry name" value="P-loop containing nucleoside triphosphate hydrolases"/>
    <property type="match status" value="1"/>
</dbReference>
<reference key="1">
    <citation type="submission" date="2006-12" db="EMBL/GenBank/DDBJ databases">
        <title>Complete sequence of Shewanella sp. W3-18-1.</title>
        <authorList>
            <consortium name="US DOE Joint Genome Institute"/>
            <person name="Copeland A."/>
            <person name="Lucas S."/>
            <person name="Lapidus A."/>
            <person name="Barry K."/>
            <person name="Detter J.C."/>
            <person name="Glavina del Rio T."/>
            <person name="Hammon N."/>
            <person name="Israni S."/>
            <person name="Dalin E."/>
            <person name="Tice H."/>
            <person name="Pitluck S."/>
            <person name="Chain P."/>
            <person name="Malfatti S."/>
            <person name="Shin M."/>
            <person name="Vergez L."/>
            <person name="Schmutz J."/>
            <person name="Larimer F."/>
            <person name="Land M."/>
            <person name="Hauser L."/>
            <person name="Kyrpides N."/>
            <person name="Lykidis A."/>
            <person name="Tiedje J."/>
            <person name="Richardson P."/>
        </authorList>
    </citation>
    <scope>NUCLEOTIDE SEQUENCE [LARGE SCALE GENOMIC DNA]</scope>
    <source>
        <strain>W3-18-1</strain>
    </source>
</reference>
<accession>A1RIY2</accession>
<name>URK_SHESW</name>
<comment type="catalytic activity">
    <reaction evidence="1">
        <text>uridine + ATP = UMP + ADP + H(+)</text>
        <dbReference type="Rhea" id="RHEA:16825"/>
        <dbReference type="ChEBI" id="CHEBI:15378"/>
        <dbReference type="ChEBI" id="CHEBI:16704"/>
        <dbReference type="ChEBI" id="CHEBI:30616"/>
        <dbReference type="ChEBI" id="CHEBI:57865"/>
        <dbReference type="ChEBI" id="CHEBI:456216"/>
        <dbReference type="EC" id="2.7.1.48"/>
    </reaction>
</comment>
<comment type="catalytic activity">
    <reaction evidence="1">
        <text>cytidine + ATP = CMP + ADP + H(+)</text>
        <dbReference type="Rhea" id="RHEA:24674"/>
        <dbReference type="ChEBI" id="CHEBI:15378"/>
        <dbReference type="ChEBI" id="CHEBI:17562"/>
        <dbReference type="ChEBI" id="CHEBI:30616"/>
        <dbReference type="ChEBI" id="CHEBI:60377"/>
        <dbReference type="ChEBI" id="CHEBI:456216"/>
        <dbReference type="EC" id="2.7.1.48"/>
    </reaction>
</comment>
<comment type="pathway">
    <text evidence="1">Pyrimidine metabolism; CTP biosynthesis via salvage pathway; CTP from cytidine: step 1/3.</text>
</comment>
<comment type="pathway">
    <text evidence="1">Pyrimidine metabolism; UMP biosynthesis via salvage pathway; UMP from uridine: step 1/1.</text>
</comment>
<comment type="subcellular location">
    <subcellularLocation>
        <location evidence="1">Cytoplasm</location>
    </subcellularLocation>
</comment>
<comment type="similarity">
    <text evidence="1">Belongs to the uridine kinase family.</text>
</comment>
<proteinExistence type="inferred from homology"/>
<gene>
    <name evidence="1" type="primary">udk</name>
    <name type="ordered locus">Sputw3181_1791</name>
</gene>
<sequence length="212" mass="24050">MNSQQCVIIAIAGASASGKSLIAKTIFDELRRDLGTDQIGVINEDAYYRDQSHLSMDERVLTNYDHPKALDHQLLCTHLQLLKSGEAVDIPCYSYTEHTRTADTVTMTPKKVIILEGILLLTDPKLRELMDASVFMDTPLDICFLRRLTRDVAERGRTMESVISQYKKTVRPMFLQFIEPSKQYADIIVPRGGKNRIATDILKTRIQHLLAK</sequence>